<feature type="chain" id="PRO_1000006760" description="Aspartate--tRNA ligase">
    <location>
        <begin position="1"/>
        <end position="591"/>
    </location>
</feature>
<feature type="region of interest" description="Aspartate" evidence="1">
    <location>
        <begin position="197"/>
        <end position="200"/>
    </location>
</feature>
<feature type="binding site" evidence="1">
    <location>
        <position position="173"/>
    </location>
    <ligand>
        <name>L-aspartate</name>
        <dbReference type="ChEBI" id="CHEBI:29991"/>
    </ligand>
</feature>
<feature type="binding site" evidence="1">
    <location>
        <begin position="219"/>
        <end position="221"/>
    </location>
    <ligand>
        <name>ATP</name>
        <dbReference type="ChEBI" id="CHEBI:30616"/>
    </ligand>
</feature>
<feature type="binding site" evidence="1">
    <location>
        <position position="219"/>
    </location>
    <ligand>
        <name>L-aspartate</name>
        <dbReference type="ChEBI" id="CHEBI:29991"/>
    </ligand>
</feature>
<feature type="binding site" evidence="1">
    <location>
        <position position="228"/>
    </location>
    <ligand>
        <name>ATP</name>
        <dbReference type="ChEBI" id="CHEBI:30616"/>
    </ligand>
</feature>
<feature type="binding site" evidence="1">
    <location>
        <position position="448"/>
    </location>
    <ligand>
        <name>L-aspartate</name>
        <dbReference type="ChEBI" id="CHEBI:29991"/>
    </ligand>
</feature>
<feature type="binding site" evidence="1">
    <location>
        <position position="482"/>
    </location>
    <ligand>
        <name>ATP</name>
        <dbReference type="ChEBI" id="CHEBI:30616"/>
    </ligand>
</feature>
<feature type="binding site" evidence="1">
    <location>
        <position position="489"/>
    </location>
    <ligand>
        <name>L-aspartate</name>
        <dbReference type="ChEBI" id="CHEBI:29991"/>
    </ligand>
</feature>
<feature type="binding site" evidence="1">
    <location>
        <begin position="534"/>
        <end position="537"/>
    </location>
    <ligand>
        <name>ATP</name>
        <dbReference type="ChEBI" id="CHEBI:30616"/>
    </ligand>
</feature>
<protein>
    <recommendedName>
        <fullName evidence="1">Aspartate--tRNA ligase</fullName>
        <ecNumber evidence="1">6.1.1.12</ecNumber>
    </recommendedName>
    <alternativeName>
        <fullName evidence="1">Aspartyl-tRNA synthetase</fullName>
        <shortName evidence="1">AspRS</shortName>
    </alternativeName>
</protein>
<accession>Q0HIZ5</accession>
<evidence type="ECO:0000255" key="1">
    <source>
        <dbReference type="HAMAP-Rule" id="MF_00044"/>
    </source>
</evidence>
<gene>
    <name evidence="1" type="primary">aspS</name>
    <name type="ordered locus">Shewmr4_1898</name>
</gene>
<organism>
    <name type="scientific">Shewanella sp. (strain MR-4)</name>
    <dbReference type="NCBI Taxonomy" id="60480"/>
    <lineage>
        <taxon>Bacteria</taxon>
        <taxon>Pseudomonadati</taxon>
        <taxon>Pseudomonadota</taxon>
        <taxon>Gammaproteobacteria</taxon>
        <taxon>Alteromonadales</taxon>
        <taxon>Shewanellaceae</taxon>
        <taxon>Shewanella</taxon>
    </lineage>
</organism>
<proteinExistence type="inferred from homology"/>
<sequence length="591" mass="66063">MRSHYCGDVNKSHVGQEVTLVGWVNRSRDLGGVVFLDLRDREGLVQVVYDPDLPEVFNVASTLRAEFCVQVKGLVRARPNSQVNAQMKTGEIEVLGKELTIINSSEPLPLSLDNYQNNSEEQRLKYRYLDLRRPEMAQRLMFRAKVTSAVRRFLDSNGFLDIETPILTKATPEGARDYLVPSRTYKGQFFALPQSPQLFKQLLMMSGFDRYYQIVKCFRDEDLRADRQPEFTQIDIETSFMTSEQVMAKTEEMMRGLFLEMLNVDLGEFPRMTYNEAMRRFGSDKPDLRNPLELVDVADLLKEVEFAVFSGPANDEEGRVAALRIPGGASLSRKQIDDYTKFVGIYGAKGLAWMKLNDLTQGLEGIQSPVLKFLNEDIVNEIISRTGAQTGDIILFGADNATVVAESMGALRLKAGEDFNLLEGQWRPLWVVDFPMFEKINGSFHAVHHPFTAPRGVTPQELEANPANRVSDAYDMVLNGCELGGGSVRIHNQEMQSAVFRILGITDEEAKEKFGFLLEALRYGTPPHAGLAFGLDRIIMLMTGASSIRDVMAFPKTTTAACPLTNAPGFANPQQLAELGISVVKAAKTED</sequence>
<comment type="function">
    <text evidence="1">Catalyzes the attachment of L-aspartate to tRNA(Asp) in a two-step reaction: L-aspartate is first activated by ATP to form Asp-AMP and then transferred to the acceptor end of tRNA(Asp).</text>
</comment>
<comment type="catalytic activity">
    <reaction evidence="1">
        <text>tRNA(Asp) + L-aspartate + ATP = L-aspartyl-tRNA(Asp) + AMP + diphosphate</text>
        <dbReference type="Rhea" id="RHEA:19649"/>
        <dbReference type="Rhea" id="RHEA-COMP:9660"/>
        <dbReference type="Rhea" id="RHEA-COMP:9678"/>
        <dbReference type="ChEBI" id="CHEBI:29991"/>
        <dbReference type="ChEBI" id="CHEBI:30616"/>
        <dbReference type="ChEBI" id="CHEBI:33019"/>
        <dbReference type="ChEBI" id="CHEBI:78442"/>
        <dbReference type="ChEBI" id="CHEBI:78516"/>
        <dbReference type="ChEBI" id="CHEBI:456215"/>
        <dbReference type="EC" id="6.1.1.12"/>
    </reaction>
</comment>
<comment type="subunit">
    <text evidence="1">Homodimer.</text>
</comment>
<comment type="subcellular location">
    <subcellularLocation>
        <location evidence="1">Cytoplasm</location>
    </subcellularLocation>
</comment>
<comment type="similarity">
    <text evidence="1">Belongs to the class-II aminoacyl-tRNA synthetase family. Type 1 subfamily.</text>
</comment>
<name>SYD_SHESM</name>
<keyword id="KW-0030">Aminoacyl-tRNA synthetase</keyword>
<keyword id="KW-0067">ATP-binding</keyword>
<keyword id="KW-0963">Cytoplasm</keyword>
<keyword id="KW-0436">Ligase</keyword>
<keyword id="KW-0547">Nucleotide-binding</keyword>
<keyword id="KW-0648">Protein biosynthesis</keyword>
<dbReference type="EC" id="6.1.1.12" evidence="1"/>
<dbReference type="EMBL" id="CP000446">
    <property type="protein sequence ID" value="ABI38972.1"/>
    <property type="molecule type" value="Genomic_DNA"/>
</dbReference>
<dbReference type="RefSeq" id="WP_011622669.1">
    <property type="nucleotide sequence ID" value="NC_008321.1"/>
</dbReference>
<dbReference type="SMR" id="Q0HIZ5"/>
<dbReference type="KEGG" id="she:Shewmr4_1898"/>
<dbReference type="HOGENOM" id="CLU_014330_3_2_6"/>
<dbReference type="GO" id="GO:0005737">
    <property type="term" value="C:cytoplasm"/>
    <property type="evidence" value="ECO:0007669"/>
    <property type="project" value="UniProtKB-SubCell"/>
</dbReference>
<dbReference type="GO" id="GO:0004815">
    <property type="term" value="F:aspartate-tRNA ligase activity"/>
    <property type="evidence" value="ECO:0007669"/>
    <property type="project" value="UniProtKB-UniRule"/>
</dbReference>
<dbReference type="GO" id="GO:0005524">
    <property type="term" value="F:ATP binding"/>
    <property type="evidence" value="ECO:0007669"/>
    <property type="project" value="UniProtKB-UniRule"/>
</dbReference>
<dbReference type="GO" id="GO:0003676">
    <property type="term" value="F:nucleic acid binding"/>
    <property type="evidence" value="ECO:0007669"/>
    <property type="project" value="InterPro"/>
</dbReference>
<dbReference type="GO" id="GO:0006422">
    <property type="term" value="P:aspartyl-tRNA aminoacylation"/>
    <property type="evidence" value="ECO:0007669"/>
    <property type="project" value="UniProtKB-UniRule"/>
</dbReference>
<dbReference type="CDD" id="cd00777">
    <property type="entry name" value="AspRS_core"/>
    <property type="match status" value="1"/>
</dbReference>
<dbReference type="CDD" id="cd04317">
    <property type="entry name" value="EcAspRS_like_N"/>
    <property type="match status" value="1"/>
</dbReference>
<dbReference type="FunFam" id="2.40.50.140:FF:000080">
    <property type="entry name" value="Aspartate--tRNA ligase"/>
    <property type="match status" value="1"/>
</dbReference>
<dbReference type="Gene3D" id="3.30.930.10">
    <property type="entry name" value="Bira Bifunctional Protein, Domain 2"/>
    <property type="match status" value="1"/>
</dbReference>
<dbReference type="Gene3D" id="3.30.1360.30">
    <property type="entry name" value="GAD-like domain"/>
    <property type="match status" value="1"/>
</dbReference>
<dbReference type="Gene3D" id="2.40.50.140">
    <property type="entry name" value="Nucleic acid-binding proteins"/>
    <property type="match status" value="1"/>
</dbReference>
<dbReference type="HAMAP" id="MF_00044">
    <property type="entry name" value="Asp_tRNA_synth_type1"/>
    <property type="match status" value="1"/>
</dbReference>
<dbReference type="InterPro" id="IPR004364">
    <property type="entry name" value="Aa-tRNA-synt_II"/>
</dbReference>
<dbReference type="InterPro" id="IPR006195">
    <property type="entry name" value="aa-tRNA-synth_II"/>
</dbReference>
<dbReference type="InterPro" id="IPR045864">
    <property type="entry name" value="aa-tRNA-synth_II/BPL/LPL"/>
</dbReference>
<dbReference type="InterPro" id="IPR004524">
    <property type="entry name" value="Asp-tRNA-ligase_1"/>
</dbReference>
<dbReference type="InterPro" id="IPR047089">
    <property type="entry name" value="Asp-tRNA-ligase_1_N"/>
</dbReference>
<dbReference type="InterPro" id="IPR002312">
    <property type="entry name" value="Asp/Asn-tRNA-synth_IIb"/>
</dbReference>
<dbReference type="InterPro" id="IPR047090">
    <property type="entry name" value="AspRS_core"/>
</dbReference>
<dbReference type="InterPro" id="IPR004115">
    <property type="entry name" value="GAD-like_sf"/>
</dbReference>
<dbReference type="InterPro" id="IPR029351">
    <property type="entry name" value="GAD_dom"/>
</dbReference>
<dbReference type="InterPro" id="IPR012340">
    <property type="entry name" value="NA-bd_OB-fold"/>
</dbReference>
<dbReference type="InterPro" id="IPR004365">
    <property type="entry name" value="NA-bd_OB_tRNA"/>
</dbReference>
<dbReference type="NCBIfam" id="TIGR00459">
    <property type="entry name" value="aspS_bact"/>
    <property type="match status" value="1"/>
</dbReference>
<dbReference type="NCBIfam" id="NF001750">
    <property type="entry name" value="PRK00476.1"/>
    <property type="match status" value="1"/>
</dbReference>
<dbReference type="PANTHER" id="PTHR22594:SF5">
    <property type="entry name" value="ASPARTATE--TRNA LIGASE, MITOCHONDRIAL"/>
    <property type="match status" value="1"/>
</dbReference>
<dbReference type="PANTHER" id="PTHR22594">
    <property type="entry name" value="ASPARTYL/LYSYL-TRNA SYNTHETASE"/>
    <property type="match status" value="1"/>
</dbReference>
<dbReference type="Pfam" id="PF02938">
    <property type="entry name" value="GAD"/>
    <property type="match status" value="1"/>
</dbReference>
<dbReference type="Pfam" id="PF00152">
    <property type="entry name" value="tRNA-synt_2"/>
    <property type="match status" value="1"/>
</dbReference>
<dbReference type="Pfam" id="PF01336">
    <property type="entry name" value="tRNA_anti-codon"/>
    <property type="match status" value="1"/>
</dbReference>
<dbReference type="PRINTS" id="PR01042">
    <property type="entry name" value="TRNASYNTHASP"/>
</dbReference>
<dbReference type="SUPFAM" id="SSF55681">
    <property type="entry name" value="Class II aaRS and biotin synthetases"/>
    <property type="match status" value="1"/>
</dbReference>
<dbReference type="SUPFAM" id="SSF55261">
    <property type="entry name" value="GAD domain-like"/>
    <property type="match status" value="1"/>
</dbReference>
<dbReference type="SUPFAM" id="SSF50249">
    <property type="entry name" value="Nucleic acid-binding proteins"/>
    <property type="match status" value="1"/>
</dbReference>
<dbReference type="PROSITE" id="PS50862">
    <property type="entry name" value="AA_TRNA_LIGASE_II"/>
    <property type="match status" value="1"/>
</dbReference>
<reference key="1">
    <citation type="submission" date="2006-08" db="EMBL/GenBank/DDBJ databases">
        <title>Complete sequence of Shewanella sp. MR-4.</title>
        <authorList>
            <consortium name="US DOE Joint Genome Institute"/>
            <person name="Copeland A."/>
            <person name="Lucas S."/>
            <person name="Lapidus A."/>
            <person name="Barry K."/>
            <person name="Detter J.C."/>
            <person name="Glavina del Rio T."/>
            <person name="Hammon N."/>
            <person name="Israni S."/>
            <person name="Dalin E."/>
            <person name="Tice H."/>
            <person name="Pitluck S."/>
            <person name="Kiss H."/>
            <person name="Brettin T."/>
            <person name="Bruce D."/>
            <person name="Han C."/>
            <person name="Tapia R."/>
            <person name="Gilna P."/>
            <person name="Schmutz J."/>
            <person name="Larimer F."/>
            <person name="Land M."/>
            <person name="Hauser L."/>
            <person name="Kyrpides N."/>
            <person name="Mikhailova N."/>
            <person name="Nealson K."/>
            <person name="Konstantinidis K."/>
            <person name="Klappenbach J."/>
            <person name="Tiedje J."/>
            <person name="Richardson P."/>
        </authorList>
    </citation>
    <scope>NUCLEOTIDE SEQUENCE [LARGE SCALE GENOMIC DNA]</scope>
    <source>
        <strain>MR-4</strain>
    </source>
</reference>